<dbReference type="EC" id="6.1.1.17" evidence="1"/>
<dbReference type="EMBL" id="CP000029">
    <property type="protein sequence ID" value="AAW53551.1"/>
    <property type="molecule type" value="Genomic_DNA"/>
</dbReference>
<dbReference type="RefSeq" id="WP_002438667.1">
    <property type="nucleotide sequence ID" value="NC_002976.3"/>
</dbReference>
<dbReference type="SMR" id="Q5HRM5"/>
<dbReference type="STRING" id="176279.SERP0168"/>
<dbReference type="KEGG" id="ser:SERP0168"/>
<dbReference type="eggNOG" id="COG0008">
    <property type="taxonomic scope" value="Bacteria"/>
</dbReference>
<dbReference type="HOGENOM" id="CLU_015768_6_1_9"/>
<dbReference type="Proteomes" id="UP000000531">
    <property type="component" value="Chromosome"/>
</dbReference>
<dbReference type="GO" id="GO:0005829">
    <property type="term" value="C:cytosol"/>
    <property type="evidence" value="ECO:0007669"/>
    <property type="project" value="TreeGrafter"/>
</dbReference>
<dbReference type="GO" id="GO:0005524">
    <property type="term" value="F:ATP binding"/>
    <property type="evidence" value="ECO:0007669"/>
    <property type="project" value="UniProtKB-UniRule"/>
</dbReference>
<dbReference type="GO" id="GO:0004818">
    <property type="term" value="F:glutamate-tRNA ligase activity"/>
    <property type="evidence" value="ECO:0007669"/>
    <property type="project" value="UniProtKB-UniRule"/>
</dbReference>
<dbReference type="GO" id="GO:0000049">
    <property type="term" value="F:tRNA binding"/>
    <property type="evidence" value="ECO:0007669"/>
    <property type="project" value="InterPro"/>
</dbReference>
<dbReference type="GO" id="GO:0008270">
    <property type="term" value="F:zinc ion binding"/>
    <property type="evidence" value="ECO:0007669"/>
    <property type="project" value="InterPro"/>
</dbReference>
<dbReference type="GO" id="GO:0006424">
    <property type="term" value="P:glutamyl-tRNA aminoacylation"/>
    <property type="evidence" value="ECO:0007669"/>
    <property type="project" value="UniProtKB-UniRule"/>
</dbReference>
<dbReference type="CDD" id="cd00808">
    <property type="entry name" value="GluRS_core"/>
    <property type="match status" value="1"/>
</dbReference>
<dbReference type="FunFam" id="1.10.10.350:FF:000002">
    <property type="entry name" value="Glutamate--tRNA ligase"/>
    <property type="match status" value="1"/>
</dbReference>
<dbReference type="FunFam" id="3.40.50.620:FF:000007">
    <property type="entry name" value="Glutamate--tRNA ligase"/>
    <property type="match status" value="1"/>
</dbReference>
<dbReference type="Gene3D" id="1.10.10.350">
    <property type="match status" value="1"/>
</dbReference>
<dbReference type="Gene3D" id="3.40.50.620">
    <property type="entry name" value="HUPs"/>
    <property type="match status" value="1"/>
</dbReference>
<dbReference type="HAMAP" id="MF_00022">
    <property type="entry name" value="Glu_tRNA_synth_type1"/>
    <property type="match status" value="1"/>
</dbReference>
<dbReference type="InterPro" id="IPR045462">
    <property type="entry name" value="aa-tRNA-synth_I_cd-bd"/>
</dbReference>
<dbReference type="InterPro" id="IPR020751">
    <property type="entry name" value="aa-tRNA-synth_I_codon-bd_sub2"/>
</dbReference>
<dbReference type="InterPro" id="IPR001412">
    <property type="entry name" value="aa-tRNA-synth_I_CS"/>
</dbReference>
<dbReference type="InterPro" id="IPR008925">
    <property type="entry name" value="aa_tRNA-synth_I_cd-bd_sf"/>
</dbReference>
<dbReference type="InterPro" id="IPR004527">
    <property type="entry name" value="Glu-tRNA-ligase_bac/mito"/>
</dbReference>
<dbReference type="InterPro" id="IPR000924">
    <property type="entry name" value="Glu/Gln-tRNA-synth"/>
</dbReference>
<dbReference type="InterPro" id="IPR020058">
    <property type="entry name" value="Glu/Gln-tRNA-synth_Ib_cat-dom"/>
</dbReference>
<dbReference type="InterPro" id="IPR049940">
    <property type="entry name" value="GluQ/Sye"/>
</dbReference>
<dbReference type="InterPro" id="IPR033910">
    <property type="entry name" value="GluRS_core"/>
</dbReference>
<dbReference type="InterPro" id="IPR014729">
    <property type="entry name" value="Rossmann-like_a/b/a_fold"/>
</dbReference>
<dbReference type="NCBIfam" id="TIGR00464">
    <property type="entry name" value="gltX_bact"/>
    <property type="match status" value="1"/>
</dbReference>
<dbReference type="PANTHER" id="PTHR43311">
    <property type="entry name" value="GLUTAMATE--TRNA LIGASE"/>
    <property type="match status" value="1"/>
</dbReference>
<dbReference type="PANTHER" id="PTHR43311:SF2">
    <property type="entry name" value="GLUTAMATE--TRNA LIGASE, MITOCHONDRIAL-RELATED"/>
    <property type="match status" value="1"/>
</dbReference>
<dbReference type="Pfam" id="PF19269">
    <property type="entry name" value="Anticodon_2"/>
    <property type="match status" value="1"/>
</dbReference>
<dbReference type="Pfam" id="PF00749">
    <property type="entry name" value="tRNA-synt_1c"/>
    <property type="match status" value="1"/>
</dbReference>
<dbReference type="PRINTS" id="PR00987">
    <property type="entry name" value="TRNASYNTHGLU"/>
</dbReference>
<dbReference type="SUPFAM" id="SSF48163">
    <property type="entry name" value="An anticodon-binding domain of class I aminoacyl-tRNA synthetases"/>
    <property type="match status" value="1"/>
</dbReference>
<dbReference type="SUPFAM" id="SSF52374">
    <property type="entry name" value="Nucleotidylyl transferase"/>
    <property type="match status" value="1"/>
</dbReference>
<dbReference type="PROSITE" id="PS00178">
    <property type="entry name" value="AA_TRNA_LIGASE_I"/>
    <property type="match status" value="1"/>
</dbReference>
<protein>
    <recommendedName>
        <fullName evidence="1">Glutamate--tRNA ligase</fullName>
        <ecNumber evidence="1">6.1.1.17</ecNumber>
    </recommendedName>
    <alternativeName>
        <fullName evidence="1">Glutamyl-tRNA synthetase</fullName>
        <shortName evidence="1">GluRS</shortName>
    </alternativeName>
</protein>
<gene>
    <name evidence="1" type="primary">gltX</name>
    <name type="ordered locus">SERP0168</name>
</gene>
<evidence type="ECO:0000255" key="1">
    <source>
        <dbReference type="HAMAP-Rule" id="MF_00022"/>
    </source>
</evidence>
<keyword id="KW-0030">Aminoacyl-tRNA synthetase</keyword>
<keyword id="KW-0067">ATP-binding</keyword>
<keyword id="KW-0963">Cytoplasm</keyword>
<keyword id="KW-0436">Ligase</keyword>
<keyword id="KW-0547">Nucleotide-binding</keyword>
<keyword id="KW-0648">Protein biosynthesis</keyword>
<keyword id="KW-1185">Reference proteome</keyword>
<comment type="function">
    <text evidence="1">Catalyzes the attachment of glutamate to tRNA(Glu) in a two-step reaction: glutamate is first activated by ATP to form Glu-AMP and then transferred to the acceptor end of tRNA(Glu).</text>
</comment>
<comment type="catalytic activity">
    <reaction evidence="1">
        <text>tRNA(Glu) + L-glutamate + ATP = L-glutamyl-tRNA(Glu) + AMP + diphosphate</text>
        <dbReference type="Rhea" id="RHEA:23540"/>
        <dbReference type="Rhea" id="RHEA-COMP:9663"/>
        <dbReference type="Rhea" id="RHEA-COMP:9680"/>
        <dbReference type="ChEBI" id="CHEBI:29985"/>
        <dbReference type="ChEBI" id="CHEBI:30616"/>
        <dbReference type="ChEBI" id="CHEBI:33019"/>
        <dbReference type="ChEBI" id="CHEBI:78442"/>
        <dbReference type="ChEBI" id="CHEBI:78520"/>
        <dbReference type="ChEBI" id="CHEBI:456215"/>
        <dbReference type="EC" id="6.1.1.17"/>
    </reaction>
</comment>
<comment type="subunit">
    <text evidence="1">Monomer.</text>
</comment>
<comment type="subcellular location">
    <subcellularLocation>
        <location evidence="1">Cytoplasm</location>
    </subcellularLocation>
</comment>
<comment type="similarity">
    <text evidence="1">Belongs to the class-I aminoacyl-tRNA synthetase family. Glutamate--tRNA ligase type 1 subfamily.</text>
</comment>
<accession>Q5HRM5</accession>
<name>SYE_STAEQ</name>
<reference key="1">
    <citation type="journal article" date="2005" name="J. Bacteriol.">
        <title>Insights on evolution of virulence and resistance from the complete genome analysis of an early methicillin-resistant Staphylococcus aureus strain and a biofilm-producing methicillin-resistant Staphylococcus epidermidis strain.</title>
        <authorList>
            <person name="Gill S.R."/>
            <person name="Fouts D.E."/>
            <person name="Archer G.L."/>
            <person name="Mongodin E.F."/>
            <person name="DeBoy R.T."/>
            <person name="Ravel J."/>
            <person name="Paulsen I.T."/>
            <person name="Kolonay J.F."/>
            <person name="Brinkac L.M."/>
            <person name="Beanan M.J."/>
            <person name="Dodson R.J."/>
            <person name="Daugherty S.C."/>
            <person name="Madupu R."/>
            <person name="Angiuoli S.V."/>
            <person name="Durkin A.S."/>
            <person name="Haft D.H."/>
            <person name="Vamathevan J.J."/>
            <person name="Khouri H."/>
            <person name="Utterback T.R."/>
            <person name="Lee C."/>
            <person name="Dimitrov G."/>
            <person name="Jiang L."/>
            <person name="Qin H."/>
            <person name="Weidman J."/>
            <person name="Tran K."/>
            <person name="Kang K.H."/>
            <person name="Hance I.R."/>
            <person name="Nelson K.E."/>
            <person name="Fraser C.M."/>
        </authorList>
    </citation>
    <scope>NUCLEOTIDE SEQUENCE [LARGE SCALE GENOMIC DNA]</scope>
    <source>
        <strain>ATCC 35984 / DSM 28319 / BCRC 17069 / CCUG 31568 / BM 3577 / RP62A</strain>
    </source>
</reference>
<proteinExistence type="inferred from homology"/>
<feature type="chain" id="PRO_0000119658" description="Glutamate--tRNA ligase">
    <location>
        <begin position="1"/>
        <end position="484"/>
    </location>
</feature>
<feature type="short sequence motif" description="'HIGH' region" evidence="1">
    <location>
        <begin position="11"/>
        <end position="21"/>
    </location>
</feature>
<feature type="short sequence motif" description="'KMSKS' region" evidence="1">
    <location>
        <begin position="252"/>
        <end position="256"/>
    </location>
</feature>
<feature type="binding site" evidence="1">
    <location>
        <position position="255"/>
    </location>
    <ligand>
        <name>ATP</name>
        <dbReference type="ChEBI" id="CHEBI:30616"/>
    </ligand>
</feature>
<sequence length="484" mass="56370">MSERIRVRYAPSPTGYLHIGNARTALFNYLFAKHYNGDFVVRIEDTDSKRNLEDGESSQFDNLKWLGLDWDESVDKDKGFGPYRQSERAEIYNPLIQQLLEEDKAYKCYMTEEELEAEREAQIARGEMPRYGGQHAHLTEEQRQQYEAEGRKPSIRFRVPKDQTYTFNDMVKGEISFESDNIGDWVIVKKDGVPTYNFAVAVDDHYMQISDVIRGDDHVSNTPKQLMIYEAFGWEAPRFGHMSLIVNEERKKLSKRDGQILQFIEQYRDLGYLPEALFNFITLLGWSPEGEEEIFSKEEFIKIFDEKRLSKSPAMFDRQKLAWVNNQYMKTKDTETVFELALPHLIKANLIPENPSEKDREWGRKLIALYQKEMSYAGEIVPLSEMFFHEMPELGKDEQEVLQGEQVPELMNHLYGKLESLESFEATEIKKMIKEVQKETGIKGKQLFMPIRVAVTGQMHGPELPNTIEVLGKDKVLSRLKNLV</sequence>
<organism>
    <name type="scientific">Staphylococcus epidermidis (strain ATCC 35984 / DSM 28319 / BCRC 17069 / CCUG 31568 / BM 3577 / RP62A)</name>
    <dbReference type="NCBI Taxonomy" id="176279"/>
    <lineage>
        <taxon>Bacteria</taxon>
        <taxon>Bacillati</taxon>
        <taxon>Bacillota</taxon>
        <taxon>Bacilli</taxon>
        <taxon>Bacillales</taxon>
        <taxon>Staphylococcaceae</taxon>
        <taxon>Staphylococcus</taxon>
    </lineage>
</organism>